<name>ACPS_RUTMC</name>
<accession>A1AWQ3</accession>
<organism>
    <name type="scientific">Ruthia magnifica subsp. Calyptogena magnifica</name>
    <dbReference type="NCBI Taxonomy" id="413404"/>
    <lineage>
        <taxon>Bacteria</taxon>
        <taxon>Pseudomonadati</taxon>
        <taxon>Pseudomonadota</taxon>
        <taxon>Gammaproteobacteria</taxon>
        <taxon>Candidatus Pseudothioglobaceae</taxon>
        <taxon>Candidatus Ruthturnera</taxon>
    </lineage>
</organism>
<proteinExistence type="inferred from homology"/>
<feature type="chain" id="PRO_1000075655" description="Holo-[acyl-carrier-protein] synthase">
    <location>
        <begin position="1"/>
        <end position="127"/>
    </location>
</feature>
<feature type="binding site" evidence="1">
    <location>
        <position position="8"/>
    </location>
    <ligand>
        <name>Mg(2+)</name>
        <dbReference type="ChEBI" id="CHEBI:18420"/>
    </ligand>
</feature>
<feature type="binding site" evidence="1">
    <location>
        <position position="57"/>
    </location>
    <ligand>
        <name>Mg(2+)</name>
        <dbReference type="ChEBI" id="CHEBI:18420"/>
    </ligand>
</feature>
<dbReference type="EC" id="2.7.8.7" evidence="1"/>
<dbReference type="EMBL" id="CP000488">
    <property type="protein sequence ID" value="ABL02360.1"/>
    <property type="molecule type" value="Genomic_DNA"/>
</dbReference>
<dbReference type="RefSeq" id="WP_011737985.1">
    <property type="nucleotide sequence ID" value="NC_008610.1"/>
</dbReference>
<dbReference type="SMR" id="A1AWQ3"/>
<dbReference type="STRING" id="413404.Rmag_0610"/>
<dbReference type="KEGG" id="rma:Rmag_0610"/>
<dbReference type="eggNOG" id="COG0736">
    <property type="taxonomic scope" value="Bacteria"/>
</dbReference>
<dbReference type="HOGENOM" id="CLU_089696_3_1_6"/>
<dbReference type="OrthoDB" id="517356at2"/>
<dbReference type="Proteomes" id="UP000002587">
    <property type="component" value="Chromosome"/>
</dbReference>
<dbReference type="GO" id="GO:0005737">
    <property type="term" value="C:cytoplasm"/>
    <property type="evidence" value="ECO:0007669"/>
    <property type="project" value="UniProtKB-SubCell"/>
</dbReference>
<dbReference type="GO" id="GO:0008897">
    <property type="term" value="F:holo-[acyl-carrier-protein] synthase activity"/>
    <property type="evidence" value="ECO:0007669"/>
    <property type="project" value="UniProtKB-UniRule"/>
</dbReference>
<dbReference type="GO" id="GO:0000287">
    <property type="term" value="F:magnesium ion binding"/>
    <property type="evidence" value="ECO:0007669"/>
    <property type="project" value="UniProtKB-UniRule"/>
</dbReference>
<dbReference type="GO" id="GO:0006633">
    <property type="term" value="P:fatty acid biosynthetic process"/>
    <property type="evidence" value="ECO:0007669"/>
    <property type="project" value="UniProtKB-UniRule"/>
</dbReference>
<dbReference type="Gene3D" id="3.90.470.20">
    <property type="entry name" value="4'-phosphopantetheinyl transferase domain"/>
    <property type="match status" value="1"/>
</dbReference>
<dbReference type="HAMAP" id="MF_00101">
    <property type="entry name" value="AcpS"/>
    <property type="match status" value="1"/>
</dbReference>
<dbReference type="InterPro" id="IPR008278">
    <property type="entry name" value="4-PPantetheinyl_Trfase_dom"/>
</dbReference>
<dbReference type="InterPro" id="IPR037143">
    <property type="entry name" value="4-PPantetheinyl_Trfase_dom_sf"/>
</dbReference>
<dbReference type="InterPro" id="IPR002582">
    <property type="entry name" value="ACPS"/>
</dbReference>
<dbReference type="InterPro" id="IPR004568">
    <property type="entry name" value="Ppantetheine-prot_Trfase_dom"/>
</dbReference>
<dbReference type="NCBIfam" id="TIGR00516">
    <property type="entry name" value="acpS"/>
    <property type="match status" value="1"/>
</dbReference>
<dbReference type="NCBIfam" id="TIGR00556">
    <property type="entry name" value="pantethn_trn"/>
    <property type="match status" value="1"/>
</dbReference>
<dbReference type="Pfam" id="PF01648">
    <property type="entry name" value="ACPS"/>
    <property type="match status" value="1"/>
</dbReference>
<dbReference type="SUPFAM" id="SSF56214">
    <property type="entry name" value="4'-phosphopantetheinyl transferase"/>
    <property type="match status" value="1"/>
</dbReference>
<sequence>MIYGVGIDIINIKRVEHILSKNKQSFVKRVLSEHEQALFANKGDSAAYCAKRFAAKEAFAKALGTGIGKIISFQDLTVRNNENGKPNFFLSEKLRLYLVNKNIKQAHLSLSDEKFNTVAFVILETED</sequence>
<evidence type="ECO:0000255" key="1">
    <source>
        <dbReference type="HAMAP-Rule" id="MF_00101"/>
    </source>
</evidence>
<comment type="function">
    <text evidence="1">Transfers the 4'-phosphopantetheine moiety from coenzyme A to a Ser of acyl-carrier-protein.</text>
</comment>
<comment type="catalytic activity">
    <reaction evidence="1">
        <text>apo-[ACP] + CoA = holo-[ACP] + adenosine 3',5'-bisphosphate + H(+)</text>
        <dbReference type="Rhea" id="RHEA:12068"/>
        <dbReference type="Rhea" id="RHEA-COMP:9685"/>
        <dbReference type="Rhea" id="RHEA-COMP:9690"/>
        <dbReference type="ChEBI" id="CHEBI:15378"/>
        <dbReference type="ChEBI" id="CHEBI:29999"/>
        <dbReference type="ChEBI" id="CHEBI:57287"/>
        <dbReference type="ChEBI" id="CHEBI:58343"/>
        <dbReference type="ChEBI" id="CHEBI:64479"/>
        <dbReference type="EC" id="2.7.8.7"/>
    </reaction>
</comment>
<comment type="cofactor">
    <cofactor evidence="1">
        <name>Mg(2+)</name>
        <dbReference type="ChEBI" id="CHEBI:18420"/>
    </cofactor>
</comment>
<comment type="subcellular location">
    <subcellularLocation>
        <location evidence="1">Cytoplasm</location>
    </subcellularLocation>
</comment>
<comment type="similarity">
    <text evidence="1">Belongs to the P-Pant transferase superfamily. AcpS family.</text>
</comment>
<gene>
    <name evidence="1" type="primary">acpS</name>
    <name type="ordered locus">Rmag_0610</name>
</gene>
<reference key="1">
    <citation type="journal article" date="2007" name="Science">
        <title>The Calyptogena magnifica chemoautotrophic symbiont genome.</title>
        <authorList>
            <person name="Newton I.L.G."/>
            <person name="Woyke T."/>
            <person name="Auchtung T.A."/>
            <person name="Dilly G.F."/>
            <person name="Dutton R.J."/>
            <person name="Fisher M.C."/>
            <person name="Fontanez K.M."/>
            <person name="Lau E."/>
            <person name="Stewart F.J."/>
            <person name="Richardson P.M."/>
            <person name="Barry K.W."/>
            <person name="Saunders E."/>
            <person name="Detter J.C."/>
            <person name="Wu D."/>
            <person name="Eisen J.A."/>
            <person name="Cavanaugh C.M."/>
        </authorList>
    </citation>
    <scope>NUCLEOTIDE SEQUENCE [LARGE SCALE GENOMIC DNA]</scope>
</reference>
<protein>
    <recommendedName>
        <fullName evidence="1">Holo-[acyl-carrier-protein] synthase</fullName>
        <shortName evidence="1">Holo-ACP synthase</shortName>
        <ecNumber evidence="1">2.7.8.7</ecNumber>
    </recommendedName>
    <alternativeName>
        <fullName evidence="1">4'-phosphopantetheinyl transferase AcpS</fullName>
    </alternativeName>
</protein>
<keyword id="KW-0963">Cytoplasm</keyword>
<keyword id="KW-0275">Fatty acid biosynthesis</keyword>
<keyword id="KW-0276">Fatty acid metabolism</keyword>
<keyword id="KW-0444">Lipid biosynthesis</keyword>
<keyword id="KW-0443">Lipid metabolism</keyword>
<keyword id="KW-0460">Magnesium</keyword>
<keyword id="KW-0479">Metal-binding</keyword>
<keyword id="KW-0808">Transferase</keyword>